<dbReference type="EMBL" id="AB065676">
    <property type="protein sequence ID" value="BAC05901.1"/>
    <property type="molecule type" value="Genomic_DNA"/>
</dbReference>
<dbReference type="EMBL" id="CH471165">
    <property type="protein sequence ID" value="EAW53748.1"/>
    <property type="molecule type" value="Genomic_DNA"/>
</dbReference>
<dbReference type="EMBL" id="BC140756">
    <property type="protein sequence ID" value="AAI40757.1"/>
    <property type="molecule type" value="mRNA"/>
</dbReference>
<dbReference type="EMBL" id="AF399629">
    <property type="protein sequence ID" value="AAK95114.1"/>
    <property type="molecule type" value="Genomic_DNA"/>
</dbReference>
<dbReference type="EMBL" id="BK004351">
    <property type="protein sequence ID" value="DAA04749.1"/>
    <property type="molecule type" value="Genomic_DNA"/>
</dbReference>
<dbReference type="CCDS" id="CCDS34323.1"/>
<dbReference type="RefSeq" id="NP_001001657.1">
    <property type="nucleotide sequence ID" value="NM_001001657.1"/>
</dbReference>
<dbReference type="SMR" id="Q8NGV0"/>
<dbReference type="FunCoup" id="Q8NGV0">
    <property type="interactions" value="442"/>
</dbReference>
<dbReference type="STRING" id="9606.ENSP00000312403"/>
<dbReference type="GlyCosmos" id="Q8NGV0">
    <property type="glycosylation" value="2 sites, No reported glycans"/>
</dbReference>
<dbReference type="GlyGen" id="Q8NGV0">
    <property type="glycosylation" value="2 sites"/>
</dbReference>
<dbReference type="iPTMnet" id="Q8NGV0"/>
<dbReference type="PhosphoSitePlus" id="Q8NGV0"/>
<dbReference type="BioMuta" id="OR2Y1"/>
<dbReference type="DMDM" id="38372774"/>
<dbReference type="MassIVE" id="Q8NGV0"/>
<dbReference type="PaxDb" id="9606-ENSP00000312403"/>
<dbReference type="PeptideAtlas" id="Q8NGV0"/>
<dbReference type="Antibodypedia" id="29640">
    <property type="antibodies" value="98 antibodies from 21 providers"/>
</dbReference>
<dbReference type="DNASU" id="134083"/>
<dbReference type="Ensembl" id="ENST00000307832.3">
    <property type="protein sequence ID" value="ENSP00000312403.2"/>
    <property type="gene ID" value="ENSG00000174339.3"/>
</dbReference>
<dbReference type="GeneID" id="134083"/>
<dbReference type="KEGG" id="hsa:134083"/>
<dbReference type="MANE-Select" id="ENST00000307832.3">
    <property type="protein sequence ID" value="ENSP00000312403.2"/>
    <property type="RefSeq nucleotide sequence ID" value="NM_001001657.1"/>
    <property type="RefSeq protein sequence ID" value="NP_001001657.1"/>
</dbReference>
<dbReference type="UCSC" id="uc003mmf.2">
    <property type="organism name" value="human"/>
</dbReference>
<dbReference type="AGR" id="HGNC:14837"/>
<dbReference type="CTD" id="134083"/>
<dbReference type="GeneCards" id="OR2Y1"/>
<dbReference type="HGNC" id="HGNC:14837">
    <property type="gene designation" value="OR2Y1"/>
</dbReference>
<dbReference type="HPA" id="ENSG00000174339">
    <property type="expression patterns" value="Not detected"/>
</dbReference>
<dbReference type="neXtProt" id="NX_Q8NGV0"/>
<dbReference type="OpenTargets" id="ENSG00000174339"/>
<dbReference type="PharmGKB" id="PA32220"/>
<dbReference type="VEuPathDB" id="HostDB:ENSG00000174339"/>
<dbReference type="eggNOG" id="ENOG502SI2C">
    <property type="taxonomic scope" value="Eukaryota"/>
</dbReference>
<dbReference type="GeneTree" id="ENSGT01130000278266"/>
<dbReference type="HOGENOM" id="CLU_012526_0_1_1"/>
<dbReference type="InParanoid" id="Q8NGV0"/>
<dbReference type="OMA" id="LWKVLWR"/>
<dbReference type="OrthoDB" id="5950740at2759"/>
<dbReference type="PAN-GO" id="Q8NGV0">
    <property type="GO annotations" value="0 GO annotations based on evolutionary models"/>
</dbReference>
<dbReference type="PhylomeDB" id="Q8NGV0"/>
<dbReference type="TreeFam" id="TF336512"/>
<dbReference type="PathwayCommons" id="Q8NGV0"/>
<dbReference type="Reactome" id="R-HSA-9752946">
    <property type="pathway name" value="Expression and translocation of olfactory receptors"/>
</dbReference>
<dbReference type="BioGRID-ORCS" id="134083">
    <property type="hits" value="5 hits in 749 CRISPR screens"/>
</dbReference>
<dbReference type="GeneWiki" id="OR2Y1"/>
<dbReference type="GenomeRNAi" id="134083"/>
<dbReference type="Pharos" id="Q8NGV0">
    <property type="development level" value="Tdark"/>
</dbReference>
<dbReference type="PRO" id="PR:Q8NGV0"/>
<dbReference type="Proteomes" id="UP000005640">
    <property type="component" value="Chromosome 5"/>
</dbReference>
<dbReference type="RNAct" id="Q8NGV0">
    <property type="molecule type" value="protein"/>
</dbReference>
<dbReference type="GO" id="GO:0005886">
    <property type="term" value="C:plasma membrane"/>
    <property type="evidence" value="ECO:0000318"/>
    <property type="project" value="GO_Central"/>
</dbReference>
<dbReference type="GO" id="GO:0004930">
    <property type="term" value="F:G protein-coupled receptor activity"/>
    <property type="evidence" value="ECO:0007669"/>
    <property type="project" value="UniProtKB-KW"/>
</dbReference>
<dbReference type="GO" id="GO:0004984">
    <property type="term" value="F:olfactory receptor activity"/>
    <property type="evidence" value="ECO:0000318"/>
    <property type="project" value="GO_Central"/>
</dbReference>
<dbReference type="GO" id="GO:0050911">
    <property type="term" value="P:detection of chemical stimulus involved in sensory perception of smell"/>
    <property type="evidence" value="ECO:0000318"/>
    <property type="project" value="GO_Central"/>
</dbReference>
<dbReference type="CDD" id="cd15433">
    <property type="entry name" value="7tmA_OR2Y-like"/>
    <property type="match status" value="1"/>
</dbReference>
<dbReference type="FunFam" id="1.10.1220.70:FF:000001">
    <property type="entry name" value="Olfactory receptor"/>
    <property type="match status" value="1"/>
</dbReference>
<dbReference type="FunFam" id="1.20.1070.10:FF:000005">
    <property type="entry name" value="Olfactory receptor"/>
    <property type="match status" value="1"/>
</dbReference>
<dbReference type="Gene3D" id="1.20.1070.10">
    <property type="entry name" value="Rhodopsin 7-helix transmembrane proteins"/>
    <property type="match status" value="1"/>
</dbReference>
<dbReference type="InterPro" id="IPR000276">
    <property type="entry name" value="GPCR_Rhodpsn"/>
</dbReference>
<dbReference type="InterPro" id="IPR017452">
    <property type="entry name" value="GPCR_Rhodpsn_7TM"/>
</dbReference>
<dbReference type="InterPro" id="IPR000725">
    <property type="entry name" value="Olfact_rcpt"/>
</dbReference>
<dbReference type="PANTHER" id="PTHR26453">
    <property type="entry name" value="OLFACTORY RECEPTOR"/>
    <property type="match status" value="1"/>
</dbReference>
<dbReference type="Pfam" id="PF13853">
    <property type="entry name" value="7tm_4"/>
    <property type="match status" value="1"/>
</dbReference>
<dbReference type="PRINTS" id="PR00237">
    <property type="entry name" value="GPCRRHODOPSN"/>
</dbReference>
<dbReference type="PRINTS" id="PR00245">
    <property type="entry name" value="OLFACTORYR"/>
</dbReference>
<dbReference type="SUPFAM" id="SSF81321">
    <property type="entry name" value="Family A G protein-coupled receptor-like"/>
    <property type="match status" value="1"/>
</dbReference>
<dbReference type="PROSITE" id="PS00237">
    <property type="entry name" value="G_PROTEIN_RECEP_F1_1"/>
    <property type="match status" value="1"/>
</dbReference>
<dbReference type="PROSITE" id="PS50262">
    <property type="entry name" value="G_PROTEIN_RECEP_F1_2"/>
    <property type="match status" value="1"/>
</dbReference>
<gene>
    <name type="primary">OR2Y1</name>
</gene>
<evidence type="ECO:0000255" key="1"/>
<evidence type="ECO:0000255" key="2">
    <source>
        <dbReference type="PROSITE-ProRule" id="PRU00521"/>
    </source>
</evidence>
<evidence type="ECO:0000269" key="3">
    <source>
    </source>
</evidence>
<evidence type="ECO:0000269" key="4">
    <source ref="2"/>
</evidence>
<evidence type="ECO:0000305" key="5"/>
<keyword id="KW-1003">Cell membrane</keyword>
<keyword id="KW-1015">Disulfide bond</keyword>
<keyword id="KW-0297">G-protein coupled receptor</keyword>
<keyword id="KW-0325">Glycoprotein</keyword>
<keyword id="KW-0472">Membrane</keyword>
<keyword id="KW-0552">Olfaction</keyword>
<keyword id="KW-0675">Receptor</keyword>
<keyword id="KW-1185">Reference proteome</keyword>
<keyword id="KW-0716">Sensory transduction</keyword>
<keyword id="KW-0807">Transducer</keyword>
<keyword id="KW-0812">Transmembrane</keyword>
<keyword id="KW-1133">Transmembrane helix</keyword>
<comment type="function">
    <text evidence="5">Odorant receptor.</text>
</comment>
<comment type="subcellular location">
    <subcellularLocation>
        <location>Cell membrane</location>
        <topology>Multi-pass membrane protein</topology>
    </subcellularLocation>
</comment>
<comment type="similarity">
    <text evidence="2">Belongs to the G-protein coupled receptor 1 family.</text>
</comment>
<comment type="online information" name="Human Olfactory Receptor Data Exploratorium (HORDE)">
    <link uri="http://genome.weizmann.ac.il/horde/card/index/symbol:OR2Y1"/>
</comment>
<organism>
    <name type="scientific">Homo sapiens</name>
    <name type="common">Human</name>
    <dbReference type="NCBI Taxonomy" id="9606"/>
    <lineage>
        <taxon>Eukaryota</taxon>
        <taxon>Metazoa</taxon>
        <taxon>Chordata</taxon>
        <taxon>Craniata</taxon>
        <taxon>Vertebrata</taxon>
        <taxon>Euteleostomi</taxon>
        <taxon>Mammalia</taxon>
        <taxon>Eutheria</taxon>
        <taxon>Euarchontoglires</taxon>
        <taxon>Primates</taxon>
        <taxon>Haplorrhini</taxon>
        <taxon>Catarrhini</taxon>
        <taxon>Hominidae</taxon>
        <taxon>Homo</taxon>
    </lineage>
</organism>
<sequence length="311" mass="34731">MGSFNTSFEDGFILVGFSDWPQLEPILFVFIFIFYSLTLFGNTIIIALSWLDLRLHTPMYFFLSHLSLLDLCFTTSTVPQLLINLCGVDRTITRGGCVAQLFIYLALGSTECVLLVVMAFDRYAAVCRPLHYMAIMHPHLCQTLAIASWGAGFVNSLIQTGLAMAMPLCGHRLNHFFCEMPVFLKLACADTEGTEAKMFVARVIVVAVPAALILGSYVHIAHAVLRVKSTAGRRKAFGTCGSHLLVVFLFYGSAIYTYLQSIHNYSEREGKFVALFYTIITPILNPLIYTLRNKDVKGALWKVLWRGRDSG</sequence>
<reference key="1">
    <citation type="submission" date="2001-07" db="EMBL/GenBank/DDBJ databases">
        <title>Genome-wide discovery and analysis of human seven transmembrane helix receptor genes.</title>
        <authorList>
            <person name="Suwa M."/>
            <person name="Sato T."/>
            <person name="Okouchi I."/>
            <person name="Arita M."/>
            <person name="Futami K."/>
            <person name="Matsumoto S."/>
            <person name="Tsutsumi S."/>
            <person name="Aburatani H."/>
            <person name="Asai K."/>
            <person name="Akiyama Y."/>
        </authorList>
    </citation>
    <scope>NUCLEOTIDE SEQUENCE [GENOMIC DNA]</scope>
</reference>
<reference key="2">
    <citation type="submission" date="2005-09" db="EMBL/GenBank/DDBJ databases">
        <authorList>
            <person name="Mural R.J."/>
            <person name="Istrail S."/>
            <person name="Sutton G.G."/>
            <person name="Florea L."/>
            <person name="Halpern A.L."/>
            <person name="Mobarry C.M."/>
            <person name="Lippert R."/>
            <person name="Walenz B."/>
            <person name="Shatkay H."/>
            <person name="Dew I."/>
            <person name="Miller J.R."/>
            <person name="Flanigan M.J."/>
            <person name="Edwards N.J."/>
            <person name="Bolanos R."/>
            <person name="Fasulo D."/>
            <person name="Halldorsson B.V."/>
            <person name="Hannenhalli S."/>
            <person name="Turner R."/>
            <person name="Yooseph S."/>
            <person name="Lu F."/>
            <person name="Nusskern D.R."/>
            <person name="Shue B.C."/>
            <person name="Zheng X.H."/>
            <person name="Zhong F."/>
            <person name="Delcher A.L."/>
            <person name="Huson D.H."/>
            <person name="Kravitz S.A."/>
            <person name="Mouchard L."/>
            <person name="Reinert K."/>
            <person name="Remington K.A."/>
            <person name="Clark A.G."/>
            <person name="Waterman M.S."/>
            <person name="Eichler E.E."/>
            <person name="Adams M.D."/>
            <person name="Hunkapiller M.W."/>
            <person name="Myers E.W."/>
            <person name="Venter J.C."/>
        </authorList>
    </citation>
    <scope>NUCLEOTIDE SEQUENCE [LARGE SCALE GENOMIC DNA]</scope>
    <scope>VARIANT LEU-200</scope>
</reference>
<reference key="3">
    <citation type="journal article" date="2004" name="Genome Res.">
        <title>The status, quality, and expansion of the NIH full-length cDNA project: the Mammalian Gene Collection (MGC).</title>
        <authorList>
            <consortium name="The MGC Project Team"/>
        </authorList>
    </citation>
    <scope>NUCLEOTIDE SEQUENCE [LARGE SCALE MRNA]</scope>
    <scope>VARIANT LEU-200</scope>
</reference>
<reference key="4">
    <citation type="journal article" date="2002" name="Genomics">
        <title>DEFOG: a practical scheme for deciphering families of genes.</title>
        <authorList>
            <person name="Fuchs T."/>
            <person name="Malecova B."/>
            <person name="Linhart C."/>
            <person name="Sharan R."/>
            <person name="Khen M."/>
            <person name="Herwig R."/>
            <person name="Shmulevich D."/>
            <person name="Elkon R."/>
            <person name="Steinfath M."/>
            <person name="O'Brien J.K."/>
            <person name="Radelof U."/>
            <person name="Lehrach H."/>
            <person name="Lancet D."/>
            <person name="Shamir R."/>
        </authorList>
    </citation>
    <scope>NUCLEOTIDE SEQUENCE [GENOMIC DNA] OF 68-282</scope>
</reference>
<reference key="5">
    <citation type="journal article" date="2004" name="Proc. Natl. Acad. Sci. U.S.A.">
        <title>The human olfactory receptor gene family.</title>
        <authorList>
            <person name="Malnic B."/>
            <person name="Godfrey P.A."/>
            <person name="Buck L.B."/>
        </authorList>
    </citation>
    <scope>IDENTIFICATION</scope>
</reference>
<reference key="6">
    <citation type="journal article" date="2004" name="Proc. Natl. Acad. Sci. U.S.A.">
        <authorList>
            <person name="Malnic B."/>
            <person name="Godfrey P.A."/>
            <person name="Buck L.B."/>
        </authorList>
    </citation>
    <scope>ERRATUM OF PUBMED:14983052</scope>
</reference>
<name>OR2Y1_HUMAN</name>
<protein>
    <recommendedName>
        <fullName>Olfactory receptor 2Y1</fullName>
    </recommendedName>
    <alternativeName>
        <fullName>Olfactory receptor OR5-2</fullName>
    </alternativeName>
</protein>
<accession>Q8NGV0</accession>
<accession>B9EIP1</accession>
<accession>Q6IFB1</accession>
<accession>Q96R16</accession>
<proteinExistence type="evidence at transcript level"/>
<feature type="chain" id="PRO_0000150513" description="Olfactory receptor 2Y1">
    <location>
        <begin position="1"/>
        <end position="311"/>
    </location>
</feature>
<feature type="topological domain" description="Extracellular" evidence="1">
    <location>
        <begin position="1"/>
        <end position="25"/>
    </location>
</feature>
<feature type="transmembrane region" description="Helical; Name=1" evidence="1">
    <location>
        <begin position="26"/>
        <end position="49"/>
    </location>
</feature>
<feature type="topological domain" description="Cytoplasmic" evidence="1">
    <location>
        <begin position="50"/>
        <end position="57"/>
    </location>
</feature>
<feature type="transmembrane region" description="Helical; Name=2" evidence="1">
    <location>
        <begin position="58"/>
        <end position="79"/>
    </location>
</feature>
<feature type="topological domain" description="Extracellular" evidence="1">
    <location>
        <begin position="80"/>
        <end position="100"/>
    </location>
</feature>
<feature type="transmembrane region" description="Helical; Name=3" evidence="1">
    <location>
        <begin position="101"/>
        <end position="120"/>
    </location>
</feature>
<feature type="topological domain" description="Cytoplasmic" evidence="1">
    <location>
        <begin position="121"/>
        <end position="139"/>
    </location>
</feature>
<feature type="transmembrane region" description="Helical; Name=4" evidence="1">
    <location>
        <begin position="140"/>
        <end position="158"/>
    </location>
</feature>
<feature type="topological domain" description="Extracellular" evidence="1">
    <location>
        <begin position="159"/>
        <end position="194"/>
    </location>
</feature>
<feature type="transmembrane region" description="Helical; Name=5" evidence="1">
    <location>
        <begin position="195"/>
        <end position="218"/>
    </location>
</feature>
<feature type="topological domain" description="Cytoplasmic" evidence="1">
    <location>
        <begin position="219"/>
        <end position="235"/>
    </location>
</feature>
<feature type="transmembrane region" description="Helical; Name=6" evidence="1">
    <location>
        <begin position="236"/>
        <end position="258"/>
    </location>
</feature>
<feature type="topological domain" description="Extracellular" evidence="1">
    <location>
        <begin position="259"/>
        <end position="271"/>
    </location>
</feature>
<feature type="transmembrane region" description="Helical; Name=7" evidence="1">
    <location>
        <begin position="272"/>
        <end position="291"/>
    </location>
</feature>
<feature type="topological domain" description="Cytoplasmic" evidence="1">
    <location>
        <begin position="292"/>
        <end position="311"/>
    </location>
</feature>
<feature type="glycosylation site" description="N-linked (GlcNAc...) asparagine" evidence="1">
    <location>
        <position position="5"/>
    </location>
</feature>
<feature type="glycosylation site" description="N-linked (GlcNAc...) asparagine" evidence="1">
    <location>
        <position position="264"/>
    </location>
</feature>
<feature type="disulfide bond" evidence="2">
    <location>
        <begin position="97"/>
        <end position="188"/>
    </location>
</feature>
<feature type="sequence variant" id="VAR_053162" description="In dbSNP:rs11960429.">
    <original>R</original>
    <variation>C</variation>
    <location>
        <position position="128"/>
    </location>
</feature>
<feature type="sequence variant" id="VAR_053163" description="In dbSNP:rs11954074.">
    <original>V</original>
    <variation>M</variation>
    <location>
        <position position="154"/>
    </location>
</feature>
<feature type="sequence variant" id="VAR_034186" description="In dbSNP:rs10464105." evidence="3 4">
    <original>V</original>
    <variation>L</variation>
    <location>
        <position position="200"/>
    </location>
</feature>